<organism>
    <name type="scientific">Abies bracteata</name>
    <name type="common">Bristle-cone fir</name>
    <name type="synonym">Pinus bracteata</name>
    <dbReference type="NCBI Taxonomy" id="66168"/>
    <lineage>
        <taxon>Eukaryota</taxon>
        <taxon>Viridiplantae</taxon>
        <taxon>Streptophyta</taxon>
        <taxon>Embryophyta</taxon>
        <taxon>Tracheophyta</taxon>
        <taxon>Spermatophyta</taxon>
        <taxon>Pinopsida</taxon>
        <taxon>Pinidae</taxon>
        <taxon>Conifers I</taxon>
        <taxon>Pinales</taxon>
        <taxon>Pinaceae</taxon>
        <taxon>Abies</taxon>
    </lineage>
</organism>
<feature type="chain" id="PRO_0000143194" description="Maturase K">
    <location>
        <begin position="1"/>
        <end position="508" status="greater than"/>
    </location>
</feature>
<feature type="non-terminal residue">
    <location>
        <position position="508"/>
    </location>
</feature>
<gene>
    <name evidence="1" type="primary">matK</name>
</gene>
<name>MATK_ABIBR</name>
<comment type="function">
    <text evidence="1">Usually encoded in the trnK tRNA gene intron. Probably assists in splicing its own and other chloroplast group II introns.</text>
</comment>
<comment type="subcellular location">
    <subcellularLocation>
        <location>Plastid</location>
        <location>Chloroplast</location>
    </subcellularLocation>
</comment>
<comment type="similarity">
    <text evidence="1">Belongs to the intron maturase 2 family. MatK subfamily.</text>
</comment>
<reference key="1">
    <citation type="journal article" date="2002" name="Kew Bull.">
        <title>Familial concepts and relationships in the conifers based on rbcL and matK sequence comparisons.</title>
        <authorList>
            <person name="Quinn C.J."/>
            <person name="Price R.A."/>
            <person name="Gadek P.A."/>
        </authorList>
    </citation>
    <scope>NUCLEOTIDE SEQUENCE [GENOMIC DNA]</scope>
</reference>
<keyword id="KW-0150">Chloroplast</keyword>
<keyword id="KW-0507">mRNA processing</keyword>
<keyword id="KW-0934">Plastid</keyword>
<keyword id="KW-0694">RNA-binding</keyword>
<keyword id="KW-0819">tRNA processing</keyword>
<proteinExistence type="inferred from homology"/>
<dbReference type="EMBL" id="AF456365">
    <property type="protein sequence ID" value="AAM46734.1"/>
    <property type="molecule type" value="Genomic_DNA"/>
</dbReference>
<dbReference type="GO" id="GO:0009507">
    <property type="term" value="C:chloroplast"/>
    <property type="evidence" value="ECO:0007669"/>
    <property type="project" value="UniProtKB-SubCell"/>
</dbReference>
<dbReference type="GO" id="GO:0003723">
    <property type="term" value="F:RNA binding"/>
    <property type="evidence" value="ECO:0007669"/>
    <property type="project" value="UniProtKB-KW"/>
</dbReference>
<dbReference type="GO" id="GO:0006397">
    <property type="term" value="P:mRNA processing"/>
    <property type="evidence" value="ECO:0007669"/>
    <property type="project" value="UniProtKB-KW"/>
</dbReference>
<dbReference type="GO" id="GO:0008033">
    <property type="term" value="P:tRNA processing"/>
    <property type="evidence" value="ECO:0007669"/>
    <property type="project" value="UniProtKB-KW"/>
</dbReference>
<dbReference type="HAMAP" id="MF_01390">
    <property type="entry name" value="MatK"/>
    <property type="match status" value="1"/>
</dbReference>
<dbReference type="InterPro" id="IPR024937">
    <property type="entry name" value="Domain_X"/>
</dbReference>
<dbReference type="InterPro" id="IPR002866">
    <property type="entry name" value="Maturase_MatK"/>
</dbReference>
<dbReference type="InterPro" id="IPR024942">
    <property type="entry name" value="Maturase_MatK_N"/>
</dbReference>
<dbReference type="PANTHER" id="PTHR34811">
    <property type="entry name" value="MATURASE K"/>
    <property type="match status" value="1"/>
</dbReference>
<dbReference type="PANTHER" id="PTHR34811:SF1">
    <property type="entry name" value="MATURASE K"/>
    <property type="match status" value="1"/>
</dbReference>
<dbReference type="Pfam" id="PF01348">
    <property type="entry name" value="Intron_maturas2"/>
    <property type="match status" value="1"/>
</dbReference>
<dbReference type="Pfam" id="PF01824">
    <property type="entry name" value="MatK_N"/>
    <property type="match status" value="1"/>
</dbReference>
<protein>
    <recommendedName>
        <fullName evidence="1">Maturase K</fullName>
    </recommendedName>
    <alternativeName>
        <fullName evidence="1">Intron maturase</fullName>
    </alternativeName>
</protein>
<geneLocation type="chloroplast"/>
<evidence type="ECO:0000255" key="1">
    <source>
        <dbReference type="HAMAP-Rule" id="MF_01390"/>
    </source>
</evidence>
<accession>Q8MDU0</accession>
<sequence length="508" mass="60423">MDEFHXYGKEDSSWQQCFLYPLFFQEDLYAIYHDHYLDGSSSSESMEHLSSNDQFSFLTVKRLIGQIRQQNNSIVFFLNCDPNPLVDRNKSFYYESVLEGLTLVLEVPFSIRSKYSVEGMNEWKSFRSIHSIFPFLEDKFPHSNYILDTRIPYSIHPEILVRTFRRWIRDAPSLHPLRSVLYKYRNSPDNLQRSIIIAPRVNTRFLLFLWNHYVYGCESILVPLLKQSFHPRSSSHGSFPDRTHFDRKIKHIIRNSRRNSLKSIWSLKDPRIHYVRYAERSIIAIKGTHLLVKKCRYHLPIFRQFYFHLWSEPYRVCSHQLSKNCSSSLGYFLRVRMKPLLVRTKMLDELFITDLITDEFDPIVPIVPIIGLLAREKLCDISGRPISKLYWTSLTDDDILDRFDRIWKNIFHYYSGSLDRDGLYRIKYILSLSCAKTLACKHKSTIRVVRKELGPELFKKYFSKEREFDFPAFSSKAAARSQRERIWHSDIPQINPLANSWQKIQDLK</sequence>